<evidence type="ECO:0000255" key="1">
    <source>
        <dbReference type="HAMAP-Rule" id="MF_03208"/>
    </source>
</evidence>
<evidence type="ECO:0000269" key="2">
    <source>
    </source>
</evidence>
<evidence type="ECO:0000303" key="3">
    <source>
    </source>
</evidence>
<sequence length="590" mass="67506">MPLKPISFRWSKTSVRSVPNPFMYGPDNLNKPLSRASQMAERVHQQTPSSTNYQQRRYFSYYYYQFPKIPRPKRNMLYYSTWSRNPVTNASNANKPSKRHMLPFGSFKISKRSFANANQKLKTKLKKLKMGKERRRFIRWWTVTSLTIVLGGVYAKIKYERGDHEENPYKIRPQSWHLYAYSALPLKTISRLWGQVNSINLPVWIRSPSYRVYSAIFGVNLDEMENPDLSSYKNLSEFFYRDIKPDARPIADGDLVSPADGKVLKFGVVENGEIEQVKGMTYSIDALLGIDTGKLAAPTHSLNFDYNSDDETIVKRDEEFAKINGISYSMDDLVGGNSKSTYHMNELTYKDEHDGTAAGERASFSKELRVAEELTPNPVEYFRKKNLYFAVIYLAPGDYHHFHSPTSWVTTLRRHFIGELFSVAPFFQKTLQGLFVLNERVALLGYWKYGFFSMVPVGATNVGSIVVNFDKDLKTNDIYEHEVYSSASSVNESTPLLDQKDYSANDILTITNSEYEDKKRKKLRKNTVYEATYTNASRLLGGYPLSKGQDIGGFKLGSTVVLVFEAPENFKFNLKVGEKVKVGQSLGGFV</sequence>
<name>PSD1_CANAL</name>
<reference key="1">
    <citation type="journal article" date="2004" name="Proc. Natl. Acad. Sci. U.S.A.">
        <title>The diploid genome sequence of Candida albicans.</title>
        <authorList>
            <person name="Jones T."/>
            <person name="Federspiel N.A."/>
            <person name="Chibana H."/>
            <person name="Dungan J."/>
            <person name="Kalman S."/>
            <person name="Magee B.B."/>
            <person name="Newport G."/>
            <person name="Thorstenson Y.R."/>
            <person name="Agabian N."/>
            <person name="Magee P.T."/>
            <person name="Davis R.W."/>
            <person name="Scherer S."/>
        </authorList>
    </citation>
    <scope>NUCLEOTIDE SEQUENCE [LARGE SCALE GENOMIC DNA]</scope>
    <source>
        <strain>SC5314 / ATCC MYA-2876</strain>
    </source>
</reference>
<reference key="2">
    <citation type="journal article" date="2007" name="Genome Biol.">
        <title>Assembly of the Candida albicans genome into sixteen supercontigs aligned on the eight chromosomes.</title>
        <authorList>
            <person name="van het Hoog M."/>
            <person name="Rast T.J."/>
            <person name="Martchenko M."/>
            <person name="Grindle S."/>
            <person name="Dignard D."/>
            <person name="Hogues H."/>
            <person name="Cuomo C."/>
            <person name="Berriman M."/>
            <person name="Scherer S."/>
            <person name="Magee B.B."/>
            <person name="Whiteway M."/>
            <person name="Chibana H."/>
            <person name="Nantel A."/>
            <person name="Magee P.T."/>
        </authorList>
    </citation>
    <scope>GENOME REANNOTATION</scope>
    <source>
        <strain>SC5314 / ATCC MYA-2876</strain>
    </source>
</reference>
<reference key="3">
    <citation type="journal article" date="2013" name="Genome Biol.">
        <title>Assembly of a phased diploid Candida albicans genome facilitates allele-specific measurements and provides a simple model for repeat and indel structure.</title>
        <authorList>
            <person name="Muzzey D."/>
            <person name="Schwartz K."/>
            <person name="Weissman J.S."/>
            <person name="Sherlock G."/>
        </authorList>
    </citation>
    <scope>NUCLEOTIDE SEQUENCE [LARGE SCALE GENOMIC DNA]</scope>
    <scope>GENOME REANNOTATION</scope>
    <source>
        <strain>SC5314 / ATCC MYA-2876</strain>
    </source>
</reference>
<reference key="4">
    <citation type="journal article" date="2010" name="Mol. Microbiol.">
        <title>Phosphatidylserine synthase and phosphatidylserine decarboxylase are essential for cell wall integrity and virulence in Candida albicans.</title>
        <authorList>
            <person name="Chen Y.L."/>
            <person name="Montedonico A.E."/>
            <person name="Kauffman S."/>
            <person name="Dunlap J.R."/>
            <person name="Menn F.M."/>
            <person name="Reynolds T.B."/>
        </authorList>
    </citation>
    <scope>FUNCTION</scope>
    <scope>DISRUPTION PHENOTYPE</scope>
    <source>
        <strain>SC5314 / ATCC MYA-2876</strain>
    </source>
</reference>
<organism>
    <name type="scientific">Candida albicans (strain SC5314 / ATCC MYA-2876)</name>
    <name type="common">Yeast</name>
    <dbReference type="NCBI Taxonomy" id="237561"/>
    <lineage>
        <taxon>Eukaryota</taxon>
        <taxon>Fungi</taxon>
        <taxon>Dikarya</taxon>
        <taxon>Ascomycota</taxon>
        <taxon>Saccharomycotina</taxon>
        <taxon>Pichiomycetes</taxon>
        <taxon>Debaryomycetaceae</taxon>
        <taxon>Candida/Lodderomyces clade</taxon>
        <taxon>Candida</taxon>
    </lineage>
</organism>
<feature type="transit peptide" description="Mitochondrion" evidence="1">
    <location>
        <begin position="1"/>
        <end position="59"/>
    </location>
</feature>
<feature type="chain" id="PRO_0000435588" description="Phosphatidylserine decarboxylase proenzyme 1, mitochondrial">
    <location>
        <begin position="60"/>
        <end position="590"/>
    </location>
</feature>
<feature type="chain" id="PRO_0000435589" description="Phosphatidylserine decarboxylase 1 beta chain" evidence="1">
    <location>
        <begin position="60"/>
        <end position="557"/>
    </location>
</feature>
<feature type="chain" id="PRO_0000435590" description="Phosphatidylserine decarboxylase 1 alpha chain" evidence="1">
    <location>
        <begin position="558"/>
        <end position="590"/>
    </location>
</feature>
<feature type="topological domain" description="Mitochondrial matrix" evidence="1">
    <location>
        <begin position="60"/>
        <end position="140"/>
    </location>
</feature>
<feature type="transmembrane region" description="Helical" evidence="1">
    <location>
        <begin position="141"/>
        <end position="159"/>
    </location>
</feature>
<feature type="topological domain" description="Mitochondrial intermembrane" evidence="1">
    <location>
        <begin position="160"/>
        <end position="590"/>
    </location>
</feature>
<feature type="active site" description="Charge relay system; for autoendoproteolytic cleavage activity" evidence="1">
    <location>
        <position position="260"/>
    </location>
</feature>
<feature type="active site" description="Charge relay system; for autoendoproteolytic cleavage activity" evidence="1">
    <location>
        <position position="403"/>
    </location>
</feature>
<feature type="active site" description="Charge relay system; for autoendoproteolytic cleavage activity" evidence="1">
    <location>
        <position position="558"/>
    </location>
</feature>
<feature type="active site" description="Schiff-base intermediate with substrate; via pyruvic acid; for decarboxylase activity" evidence="1">
    <location>
        <position position="558"/>
    </location>
</feature>
<feature type="site" description="Cleavage (non-hydrolytic); by autocatalysis" evidence="1">
    <location>
        <begin position="557"/>
        <end position="558"/>
    </location>
</feature>
<feature type="modified residue" description="Pyruvic acid (Ser); by autocatalysis" evidence="1">
    <location>
        <position position="558"/>
    </location>
</feature>
<accession>Q5ABC5</accession>
<accession>A0A1D8PC92</accession>
<gene>
    <name evidence="1 3" type="primary">PSD1</name>
    <name type="ordered locus">CAALFM_C100610WA</name>
    <name type="ORF">CaO19.13466</name>
    <name type="ORF">CaO19.6045</name>
    <name type="ORF">orf19.6045</name>
</gene>
<proteinExistence type="inferred from homology"/>
<keyword id="KW-0210">Decarboxylase</keyword>
<keyword id="KW-0444">Lipid biosynthesis</keyword>
<keyword id="KW-0443">Lipid metabolism</keyword>
<keyword id="KW-0456">Lyase</keyword>
<keyword id="KW-0472">Membrane</keyword>
<keyword id="KW-0496">Mitochondrion</keyword>
<keyword id="KW-0999">Mitochondrion inner membrane</keyword>
<keyword id="KW-0594">Phospholipid biosynthesis</keyword>
<keyword id="KW-1208">Phospholipid metabolism</keyword>
<keyword id="KW-0670">Pyruvate</keyword>
<keyword id="KW-1185">Reference proteome</keyword>
<keyword id="KW-0809">Transit peptide</keyword>
<keyword id="KW-0812">Transmembrane</keyword>
<keyword id="KW-1133">Transmembrane helix</keyword>
<keyword id="KW-0865">Zymogen</keyword>
<dbReference type="EC" id="4.1.1.65" evidence="1"/>
<dbReference type="EMBL" id="CP017623">
    <property type="protein sequence ID" value="AOW25759.1"/>
    <property type="molecule type" value="Genomic_DNA"/>
</dbReference>
<dbReference type="RefSeq" id="XP_719007.1">
    <property type="nucleotide sequence ID" value="XM_713914.1"/>
</dbReference>
<dbReference type="SMR" id="Q5ABC5"/>
<dbReference type="FunCoup" id="Q5ABC5">
    <property type="interactions" value="508"/>
</dbReference>
<dbReference type="STRING" id="237561.Q5ABC5"/>
<dbReference type="EnsemblFungi" id="C1_00610W_A-T">
    <property type="protein sequence ID" value="C1_00610W_A-T-p1"/>
    <property type="gene ID" value="C1_00610W_A"/>
</dbReference>
<dbReference type="GeneID" id="3639382"/>
<dbReference type="KEGG" id="cal:CAALFM_C100610WA"/>
<dbReference type="CGD" id="CAL0000188438">
    <property type="gene designation" value="PSD1"/>
</dbReference>
<dbReference type="VEuPathDB" id="FungiDB:C1_00610W_A"/>
<dbReference type="eggNOG" id="KOG2420">
    <property type="taxonomic scope" value="Eukaryota"/>
</dbReference>
<dbReference type="HOGENOM" id="CLU_029061_1_0_1"/>
<dbReference type="InParanoid" id="Q5ABC5"/>
<dbReference type="OMA" id="HSPASWV"/>
<dbReference type="OrthoDB" id="4330at2759"/>
<dbReference type="BRENDA" id="4.1.1.65">
    <property type="organism ID" value="1096"/>
</dbReference>
<dbReference type="UniPathway" id="UPA00558">
    <property type="reaction ID" value="UER00616"/>
</dbReference>
<dbReference type="PRO" id="PR:Q5ABC5"/>
<dbReference type="Proteomes" id="UP000000559">
    <property type="component" value="Chromosome 1"/>
</dbReference>
<dbReference type="GO" id="GO:0005789">
    <property type="term" value="C:endoplasmic reticulum membrane"/>
    <property type="evidence" value="ECO:0007669"/>
    <property type="project" value="EnsemblFungi"/>
</dbReference>
<dbReference type="GO" id="GO:0005811">
    <property type="term" value="C:lipid droplet"/>
    <property type="evidence" value="ECO:0007669"/>
    <property type="project" value="EnsemblFungi"/>
</dbReference>
<dbReference type="GO" id="GO:0005743">
    <property type="term" value="C:mitochondrial inner membrane"/>
    <property type="evidence" value="ECO:0007669"/>
    <property type="project" value="UniProtKB-SubCell"/>
</dbReference>
<dbReference type="GO" id="GO:0005739">
    <property type="term" value="C:mitochondrion"/>
    <property type="evidence" value="ECO:0000318"/>
    <property type="project" value="GO_Central"/>
</dbReference>
<dbReference type="GO" id="GO:0004609">
    <property type="term" value="F:phosphatidylserine decarboxylase activity"/>
    <property type="evidence" value="ECO:0000318"/>
    <property type="project" value="GO_Central"/>
</dbReference>
<dbReference type="GO" id="GO:0036244">
    <property type="term" value="P:cellular response to neutral pH"/>
    <property type="evidence" value="ECO:0000315"/>
    <property type="project" value="CGD"/>
</dbReference>
<dbReference type="GO" id="GO:0009267">
    <property type="term" value="P:cellular response to starvation"/>
    <property type="evidence" value="ECO:0000315"/>
    <property type="project" value="CGD"/>
</dbReference>
<dbReference type="GO" id="GO:0030447">
    <property type="term" value="P:filamentous growth"/>
    <property type="evidence" value="ECO:0000315"/>
    <property type="project" value="CGD"/>
</dbReference>
<dbReference type="GO" id="GO:0036180">
    <property type="term" value="P:filamentous growth of a population of unicellular organisms in response to biotic stimulus"/>
    <property type="evidence" value="ECO:0000315"/>
    <property type="project" value="CGD"/>
</dbReference>
<dbReference type="GO" id="GO:0036171">
    <property type="term" value="P:filamentous growth of a population of unicellular organisms in response to chemical stimulus"/>
    <property type="evidence" value="ECO:0000315"/>
    <property type="project" value="CGD"/>
</dbReference>
<dbReference type="GO" id="GO:0036178">
    <property type="term" value="P:filamentous growth of a population of unicellular organisms in response to neutral pH"/>
    <property type="evidence" value="ECO:0000315"/>
    <property type="project" value="CGD"/>
</dbReference>
<dbReference type="GO" id="GO:0036170">
    <property type="term" value="P:filamentous growth of a population of unicellular organisms in response to starvation"/>
    <property type="evidence" value="ECO:0000315"/>
    <property type="project" value="CGD"/>
</dbReference>
<dbReference type="GO" id="GO:0140042">
    <property type="term" value="P:lipid droplet formation"/>
    <property type="evidence" value="ECO:0007669"/>
    <property type="project" value="EnsemblFungi"/>
</dbReference>
<dbReference type="GO" id="GO:0006122">
    <property type="term" value="P:mitochondrial electron transport, ubiquinol to cytochrome c"/>
    <property type="evidence" value="ECO:0007669"/>
    <property type="project" value="EnsemblFungi"/>
</dbReference>
<dbReference type="GO" id="GO:0006656">
    <property type="term" value="P:phosphatidylcholine biosynthetic process"/>
    <property type="evidence" value="ECO:0007669"/>
    <property type="project" value="EnsemblFungi"/>
</dbReference>
<dbReference type="GO" id="GO:0006646">
    <property type="term" value="P:phosphatidylethanolamine biosynthetic process"/>
    <property type="evidence" value="ECO:0000315"/>
    <property type="project" value="CGD"/>
</dbReference>
<dbReference type="GO" id="GO:0006659">
    <property type="term" value="P:phosphatidylserine biosynthetic process"/>
    <property type="evidence" value="ECO:0000315"/>
    <property type="project" value="CGD"/>
</dbReference>
<dbReference type="GO" id="GO:0010636">
    <property type="term" value="P:positive regulation of mitochondrial fusion"/>
    <property type="evidence" value="ECO:0007669"/>
    <property type="project" value="EnsemblFungi"/>
</dbReference>
<dbReference type="GO" id="GO:0010954">
    <property type="term" value="P:positive regulation of protein processing"/>
    <property type="evidence" value="ECO:0007669"/>
    <property type="project" value="EnsemblFungi"/>
</dbReference>
<dbReference type="GO" id="GO:0016540">
    <property type="term" value="P:protein autoprocessing"/>
    <property type="evidence" value="ECO:0007669"/>
    <property type="project" value="UniProtKB-UniRule"/>
</dbReference>
<dbReference type="HAMAP" id="MF_03208">
    <property type="entry name" value="PS_decarb_PSD_B_type1_euk"/>
    <property type="match status" value="1"/>
</dbReference>
<dbReference type="InterPro" id="IPR003817">
    <property type="entry name" value="PS_Dcarbxylase"/>
</dbReference>
<dbReference type="InterPro" id="IPR033177">
    <property type="entry name" value="PSD-B"/>
</dbReference>
<dbReference type="InterPro" id="IPR033661">
    <property type="entry name" value="PSD_type1_euk"/>
</dbReference>
<dbReference type="NCBIfam" id="TIGR00163">
    <property type="entry name" value="PS_decarb"/>
    <property type="match status" value="1"/>
</dbReference>
<dbReference type="PANTHER" id="PTHR10067">
    <property type="entry name" value="PHOSPHATIDYLSERINE DECARBOXYLASE"/>
    <property type="match status" value="1"/>
</dbReference>
<dbReference type="PANTHER" id="PTHR10067:SF6">
    <property type="entry name" value="PHOSPHATIDYLSERINE DECARBOXYLASE PROENZYME, MITOCHONDRIAL"/>
    <property type="match status" value="1"/>
</dbReference>
<dbReference type="Pfam" id="PF02666">
    <property type="entry name" value="PS_Dcarbxylase"/>
    <property type="match status" value="2"/>
</dbReference>
<comment type="function">
    <text evidence="1 2">Catalyzes the formation of phosphatidylethanolamine (PtdEtn) from phosphatidylserine (PtdSer). Plays a central role in phospholipid metabolism and in the interorganelle trafficking of phosphatidylserine (By similarity). Important for virulence (PubMed:20132453).</text>
</comment>
<comment type="catalytic activity">
    <reaction evidence="1">
        <text>a 1,2-diacyl-sn-glycero-3-phospho-L-serine + H(+) = a 1,2-diacyl-sn-glycero-3-phosphoethanolamine + CO2</text>
        <dbReference type="Rhea" id="RHEA:20828"/>
        <dbReference type="ChEBI" id="CHEBI:15378"/>
        <dbReference type="ChEBI" id="CHEBI:16526"/>
        <dbReference type="ChEBI" id="CHEBI:57262"/>
        <dbReference type="ChEBI" id="CHEBI:64612"/>
        <dbReference type="EC" id="4.1.1.65"/>
    </reaction>
</comment>
<comment type="cofactor">
    <cofactor evidence="1">
        <name>pyruvate</name>
        <dbReference type="ChEBI" id="CHEBI:15361"/>
    </cofactor>
    <text evidence="1">Binds 1 pyruvoyl group covalently per subunit.</text>
</comment>
<comment type="pathway">
    <text evidence="1">Phospholipid metabolism; phosphatidylethanolamine biosynthesis; phosphatidylethanolamine from CDP-diacylglycerol: step 2/2.</text>
</comment>
<comment type="subunit">
    <text evidence="1">Heterodimer of a large membrane-associated beta subunit and a small pyruvoyl-containing alpha subunit.</text>
</comment>
<comment type="subcellular location">
    <molecule>Phosphatidylserine decarboxylase 1 beta chain</molecule>
    <subcellularLocation>
        <location evidence="1">Mitochondrion inner membrane</location>
        <topology evidence="1">Single-pass membrane protein</topology>
        <orientation evidence="1">Intermembrane side</orientation>
    </subcellularLocation>
</comment>
<comment type="subcellular location">
    <molecule>Phosphatidylserine decarboxylase 1 alpha chain</molecule>
    <subcellularLocation>
        <location evidence="1">Mitochondrion inner membrane</location>
        <topology evidence="1">Peripheral membrane protein</topology>
        <orientation evidence="1">Intermembrane side</orientation>
    </subcellularLocation>
    <text evidence="1">Anchored to the mitochondrial inner membrane through its interaction with the integral membrane beta chain.</text>
</comment>
<comment type="PTM">
    <text evidence="1">Is synthesized initially as an inactive proenzyme. Formation of the active enzyme involves a self-maturation process in which the active site pyruvoyl group is generated from an internal serine residue via an autocatalytic post-translational modification. Two non-identical subunits are generated from the proenzyme in this reaction, and the pyruvate is formed at the N-terminus of the alpha chain, which is derived from the carboxyl end of the proenzyme. The autoendoproteolytic cleavage occurs by a canonical serine protease mechanism, in which the side chain hydroxyl group of the serine supplies its oxygen atom to form the C-terminus of the beta chain, while the remainder of the serine residue undergoes an oxidative deamination to produce ammonia and the pyruvoyl prosthetic group on the alpha chain. During this reaction, the Ser that is part of the protease active site of the proenzyme becomes the pyruvoyl prosthetic group, which constitutes an essential element of the active site of the mature decarboxylase.</text>
</comment>
<comment type="disruption phenotype">
    <text evidence="2">A psd1 psd2 double mutant displays diminished phosphatidylethanolamine levels. It exhibits defects in cell wall integrity, mitochondrial function, filamentous growth and is less virulent than the wild-type.</text>
</comment>
<comment type="similarity">
    <text evidence="1">Belongs to the phosphatidylserine decarboxylase family. PSD-B subfamily. Eukaryotic type I sub-subfamily.</text>
</comment>
<protein>
    <recommendedName>
        <fullName evidence="1 3">Phosphatidylserine decarboxylase proenzyme 1, mitochondrial</fullName>
        <ecNumber evidence="1">4.1.1.65</ecNumber>
    </recommendedName>
    <component>
        <recommendedName>
            <fullName evidence="1">Phosphatidylserine decarboxylase 1 beta chain</fullName>
        </recommendedName>
    </component>
    <component>
        <recommendedName>
            <fullName evidence="1">Phosphatidylserine decarboxylase 1 alpha chain</fullName>
        </recommendedName>
    </component>
</protein>